<accession>Q8XHL4</accession>
<dbReference type="EC" id="6.3.4.3" evidence="1"/>
<dbReference type="EMBL" id="BA000016">
    <property type="protein sequence ID" value="BAB82175.1"/>
    <property type="molecule type" value="Genomic_DNA"/>
</dbReference>
<dbReference type="RefSeq" id="WP_003459368.1">
    <property type="nucleotide sequence ID" value="NC_003366.1"/>
</dbReference>
<dbReference type="SMR" id="Q8XHL4"/>
<dbReference type="STRING" id="195102.gene:10491796"/>
<dbReference type="KEGG" id="cpe:CPE2469"/>
<dbReference type="HOGENOM" id="CLU_003601_3_3_9"/>
<dbReference type="UniPathway" id="UPA00193"/>
<dbReference type="Proteomes" id="UP000000818">
    <property type="component" value="Chromosome"/>
</dbReference>
<dbReference type="GO" id="GO:0005524">
    <property type="term" value="F:ATP binding"/>
    <property type="evidence" value="ECO:0007669"/>
    <property type="project" value="UniProtKB-UniRule"/>
</dbReference>
<dbReference type="GO" id="GO:0004329">
    <property type="term" value="F:formate-tetrahydrofolate ligase activity"/>
    <property type="evidence" value="ECO:0007669"/>
    <property type="project" value="UniProtKB-UniRule"/>
</dbReference>
<dbReference type="GO" id="GO:0035999">
    <property type="term" value="P:tetrahydrofolate interconversion"/>
    <property type="evidence" value="ECO:0007669"/>
    <property type="project" value="UniProtKB-UniRule"/>
</dbReference>
<dbReference type="CDD" id="cd00477">
    <property type="entry name" value="FTHFS"/>
    <property type="match status" value="1"/>
</dbReference>
<dbReference type="FunFam" id="3.30.1510.10:FF:000001">
    <property type="entry name" value="Formate--tetrahydrofolate ligase"/>
    <property type="match status" value="1"/>
</dbReference>
<dbReference type="FunFam" id="3.10.410.10:FF:000001">
    <property type="entry name" value="Putative formate--tetrahydrofolate ligase"/>
    <property type="match status" value="1"/>
</dbReference>
<dbReference type="Gene3D" id="3.30.1510.10">
    <property type="entry name" value="Domain 2, N(10)-formyltetrahydrofolate synthetase"/>
    <property type="match status" value="1"/>
</dbReference>
<dbReference type="Gene3D" id="3.10.410.10">
    <property type="entry name" value="Formyltetrahydrofolate synthetase, domain 3"/>
    <property type="match status" value="1"/>
</dbReference>
<dbReference type="Gene3D" id="3.40.50.300">
    <property type="entry name" value="P-loop containing nucleotide triphosphate hydrolases"/>
    <property type="match status" value="1"/>
</dbReference>
<dbReference type="HAMAP" id="MF_01543">
    <property type="entry name" value="FTHFS"/>
    <property type="match status" value="1"/>
</dbReference>
<dbReference type="InterPro" id="IPR000559">
    <property type="entry name" value="Formate_THF_ligase"/>
</dbReference>
<dbReference type="InterPro" id="IPR020628">
    <property type="entry name" value="Formate_THF_ligase_CS"/>
</dbReference>
<dbReference type="InterPro" id="IPR027417">
    <property type="entry name" value="P-loop_NTPase"/>
</dbReference>
<dbReference type="NCBIfam" id="NF010030">
    <property type="entry name" value="PRK13505.1"/>
    <property type="match status" value="1"/>
</dbReference>
<dbReference type="Pfam" id="PF01268">
    <property type="entry name" value="FTHFS"/>
    <property type="match status" value="1"/>
</dbReference>
<dbReference type="SUPFAM" id="SSF52540">
    <property type="entry name" value="P-loop containing nucleoside triphosphate hydrolases"/>
    <property type="match status" value="1"/>
</dbReference>
<dbReference type="PROSITE" id="PS00721">
    <property type="entry name" value="FTHFS_1"/>
    <property type="match status" value="1"/>
</dbReference>
<dbReference type="PROSITE" id="PS00722">
    <property type="entry name" value="FTHFS_2"/>
    <property type="match status" value="1"/>
</dbReference>
<evidence type="ECO:0000255" key="1">
    <source>
        <dbReference type="HAMAP-Rule" id="MF_01543"/>
    </source>
</evidence>
<reference key="1">
    <citation type="journal article" date="2002" name="Proc. Natl. Acad. Sci. U.S.A.">
        <title>Complete genome sequence of Clostridium perfringens, an anaerobic flesh-eater.</title>
        <authorList>
            <person name="Shimizu T."/>
            <person name="Ohtani K."/>
            <person name="Hirakawa H."/>
            <person name="Ohshima K."/>
            <person name="Yamashita A."/>
            <person name="Shiba T."/>
            <person name="Ogasawara N."/>
            <person name="Hattori M."/>
            <person name="Kuhara S."/>
            <person name="Hayashi H."/>
        </authorList>
    </citation>
    <scope>NUCLEOTIDE SEQUENCE [LARGE SCALE GENOMIC DNA]</scope>
    <source>
        <strain>13 / Type A</strain>
    </source>
</reference>
<feature type="chain" id="PRO_0000199340" description="Formate--tetrahydrofolate ligase">
    <location>
        <begin position="1"/>
        <end position="556"/>
    </location>
</feature>
<feature type="binding site" evidence="1">
    <location>
        <begin position="65"/>
        <end position="72"/>
    </location>
    <ligand>
        <name>ATP</name>
        <dbReference type="ChEBI" id="CHEBI:30616"/>
    </ligand>
</feature>
<keyword id="KW-0067">ATP-binding</keyword>
<keyword id="KW-0436">Ligase</keyword>
<keyword id="KW-0547">Nucleotide-binding</keyword>
<keyword id="KW-0554">One-carbon metabolism</keyword>
<keyword id="KW-1185">Reference proteome</keyword>
<name>FTHS_CLOPE</name>
<sequence>MKNDIEIAQSAKMEPIINIAKKIGLGEDDIELYGKYKCKISLDAIKKLENNKDGKLVLVTAINPTPAGEGKSTVTVGLGQALNKIGKNTVIALREPSLGPVFGIKGGAAGGGYAQVVPMEDINLHFTGDMHAITSANNLLCAAIDNHIHQGNLLRIDSRRIVFKRVMDMNDRALRNIVVGMGGKINGFLREDGFMITVASEIMAILCMASDLEDLKERMGNILIAYNLDGEPVYAKELEVQGAMALLMKDAIKPNLVQTLENTPAIIHGGPFANIAHGCNSIIATKTALKMSDITITEAGFGADLGAEKFLDIKCRYGNLNPDCVVLVATIRALKHHGGVKKDELNISNVDALNKGMKNLEKQIENIKAYGVPVVVAINKFITDSDEEVKAIEDFCKNIGVEVSLTEVWEKGGEGGIDLANKVIKTMETEPSNFKMIYDSEESIKDKILKIVQTIYGGKGVNYTPQALKQIAEIEKFNLDKLPICMAKTQYSLSDNPSLLGRPENFDITVKEVRVSNGAGFIVVLTGDVMTMPGLPKVPAANRMDIKDNGEIVGLF</sequence>
<gene>
    <name evidence="1" type="primary">fhs</name>
    <name type="ordered locus">CPE2469</name>
</gene>
<comment type="catalytic activity">
    <reaction evidence="1">
        <text>(6S)-5,6,7,8-tetrahydrofolate + formate + ATP = (6R)-10-formyltetrahydrofolate + ADP + phosphate</text>
        <dbReference type="Rhea" id="RHEA:20221"/>
        <dbReference type="ChEBI" id="CHEBI:15740"/>
        <dbReference type="ChEBI" id="CHEBI:30616"/>
        <dbReference type="ChEBI" id="CHEBI:43474"/>
        <dbReference type="ChEBI" id="CHEBI:57453"/>
        <dbReference type="ChEBI" id="CHEBI:195366"/>
        <dbReference type="ChEBI" id="CHEBI:456216"/>
        <dbReference type="EC" id="6.3.4.3"/>
    </reaction>
</comment>
<comment type="pathway">
    <text evidence="1">One-carbon metabolism; tetrahydrofolate interconversion.</text>
</comment>
<comment type="similarity">
    <text evidence="1">Belongs to the formate--tetrahydrofolate ligase family.</text>
</comment>
<protein>
    <recommendedName>
        <fullName evidence="1">Formate--tetrahydrofolate ligase</fullName>
        <ecNumber evidence="1">6.3.4.3</ecNumber>
    </recommendedName>
    <alternativeName>
        <fullName evidence="1">Formyltetrahydrofolate synthetase</fullName>
        <shortName evidence="1">FHS</shortName>
        <shortName evidence="1">FTHFS</shortName>
    </alternativeName>
</protein>
<organism>
    <name type="scientific">Clostridium perfringens (strain 13 / Type A)</name>
    <dbReference type="NCBI Taxonomy" id="195102"/>
    <lineage>
        <taxon>Bacteria</taxon>
        <taxon>Bacillati</taxon>
        <taxon>Bacillota</taxon>
        <taxon>Clostridia</taxon>
        <taxon>Eubacteriales</taxon>
        <taxon>Clostridiaceae</taxon>
        <taxon>Clostridium</taxon>
    </lineage>
</organism>
<proteinExistence type="inferred from homology"/>